<sequence>MSSATAAATATIAAAAAAAAKLAATPAPAPSRRRLTLRGNPTARRCVAAMAVSTPRSAAAAAFLERRESERALHFVKYQGLGNDFIMMDNRDSAVPKVTPEEAAKLCDRNFGVGADGVIFVMPGVNGADYTMRIFNSDGSEPEMCGNGVRCFARFIAELENLQGTHSFKIHTGAGLIIPEIQNDGKVKVDMGQPILSGPDIPTKLPSTKNEAVVQADLAVDGSTWQVTCVSMGNPHCVTFGTKELKVLHVDDLKLSDIGPKFEHHEMFPARTNTEFVEVLSRSHLKMRVWERGAGATLACGTGACAVVVAAVLEGRAERKCVVDLPGGPLEIEWREDDNHIYMTGPAEAVFYGSAVH</sequence>
<gene>
    <name type="primary">DAPF</name>
    <name type="ORF">OsI_037517</name>
</gene>
<name>DAPF_ORYSI</name>
<reference key="1">
    <citation type="journal article" date="2005" name="PLoS Biol.">
        <title>The genomes of Oryza sativa: a history of duplications.</title>
        <authorList>
            <person name="Yu J."/>
            <person name="Wang J."/>
            <person name="Lin W."/>
            <person name="Li S."/>
            <person name="Li H."/>
            <person name="Zhou J."/>
            <person name="Ni P."/>
            <person name="Dong W."/>
            <person name="Hu S."/>
            <person name="Zeng C."/>
            <person name="Zhang J."/>
            <person name="Zhang Y."/>
            <person name="Li R."/>
            <person name="Xu Z."/>
            <person name="Li S."/>
            <person name="Li X."/>
            <person name="Zheng H."/>
            <person name="Cong L."/>
            <person name="Lin L."/>
            <person name="Yin J."/>
            <person name="Geng J."/>
            <person name="Li G."/>
            <person name="Shi J."/>
            <person name="Liu J."/>
            <person name="Lv H."/>
            <person name="Li J."/>
            <person name="Wang J."/>
            <person name="Deng Y."/>
            <person name="Ran L."/>
            <person name="Shi X."/>
            <person name="Wang X."/>
            <person name="Wu Q."/>
            <person name="Li C."/>
            <person name="Ren X."/>
            <person name="Wang J."/>
            <person name="Wang X."/>
            <person name="Li D."/>
            <person name="Liu D."/>
            <person name="Zhang X."/>
            <person name="Ji Z."/>
            <person name="Zhao W."/>
            <person name="Sun Y."/>
            <person name="Zhang Z."/>
            <person name="Bao J."/>
            <person name="Han Y."/>
            <person name="Dong L."/>
            <person name="Ji J."/>
            <person name="Chen P."/>
            <person name="Wu S."/>
            <person name="Liu J."/>
            <person name="Xiao Y."/>
            <person name="Bu D."/>
            <person name="Tan J."/>
            <person name="Yang L."/>
            <person name="Ye C."/>
            <person name="Zhang J."/>
            <person name="Xu J."/>
            <person name="Zhou Y."/>
            <person name="Yu Y."/>
            <person name="Zhang B."/>
            <person name="Zhuang S."/>
            <person name="Wei H."/>
            <person name="Liu B."/>
            <person name="Lei M."/>
            <person name="Yu H."/>
            <person name="Li Y."/>
            <person name="Xu H."/>
            <person name="Wei S."/>
            <person name="He X."/>
            <person name="Fang L."/>
            <person name="Zhang Z."/>
            <person name="Zhang Y."/>
            <person name="Huang X."/>
            <person name="Su Z."/>
            <person name="Tong W."/>
            <person name="Li J."/>
            <person name="Tong Z."/>
            <person name="Li S."/>
            <person name="Ye J."/>
            <person name="Wang L."/>
            <person name="Fang L."/>
            <person name="Lei T."/>
            <person name="Chen C.-S."/>
            <person name="Chen H.-C."/>
            <person name="Xu Z."/>
            <person name="Li H."/>
            <person name="Huang H."/>
            <person name="Zhang F."/>
            <person name="Xu H."/>
            <person name="Li N."/>
            <person name="Zhao C."/>
            <person name="Li S."/>
            <person name="Dong L."/>
            <person name="Huang Y."/>
            <person name="Li L."/>
            <person name="Xi Y."/>
            <person name="Qi Q."/>
            <person name="Li W."/>
            <person name="Zhang B."/>
            <person name="Hu W."/>
            <person name="Zhang Y."/>
            <person name="Tian X."/>
            <person name="Jiao Y."/>
            <person name="Liang X."/>
            <person name="Jin J."/>
            <person name="Gao L."/>
            <person name="Zheng W."/>
            <person name="Hao B."/>
            <person name="Liu S.-M."/>
            <person name="Wang W."/>
            <person name="Yuan L."/>
            <person name="Cao M."/>
            <person name="McDermott J."/>
            <person name="Samudrala R."/>
            <person name="Wang J."/>
            <person name="Wong G.K.-S."/>
            <person name="Yang H."/>
        </authorList>
    </citation>
    <scope>NUCLEOTIDE SEQUENCE [LARGE SCALE GENOMIC DNA]</scope>
    <source>
        <strain>cv. 93-11</strain>
    </source>
</reference>
<feature type="transit peptide" description="Chloroplast" evidence="2">
    <location>
        <begin position="1"/>
        <end position="47"/>
    </location>
</feature>
<feature type="chain" id="PRO_0000307180" description="Putative diaminopimelate epimerase, chloroplastic">
    <location>
        <begin position="48"/>
        <end position="357"/>
    </location>
</feature>
<feature type="active site" evidence="1">
    <location>
        <position position="145"/>
    </location>
</feature>
<feature type="active site" evidence="1">
    <location>
        <position position="300"/>
    </location>
</feature>
<keyword id="KW-0028">Amino-acid biosynthesis</keyword>
<keyword id="KW-0150">Chloroplast</keyword>
<keyword id="KW-0413">Isomerase</keyword>
<keyword id="KW-0457">Lysine biosynthesis</keyword>
<keyword id="KW-0934">Plastid</keyword>
<keyword id="KW-1185">Reference proteome</keyword>
<keyword id="KW-0809">Transit peptide</keyword>
<evidence type="ECO:0000250" key="1"/>
<evidence type="ECO:0000255" key="2"/>
<evidence type="ECO:0000305" key="3"/>
<accession>A2ZLS4</accession>
<proteinExistence type="inferred from homology"/>
<dbReference type="EC" id="5.1.1.7"/>
<dbReference type="EMBL" id="CM000137">
    <property type="protein sequence ID" value="EAY83558.1"/>
    <property type="molecule type" value="Genomic_DNA"/>
</dbReference>
<dbReference type="SMR" id="A2ZLS4"/>
<dbReference type="STRING" id="39946.A2ZLS4"/>
<dbReference type="EnsemblPlants" id="BGIOSGA037614-TA">
    <property type="protein sequence ID" value="BGIOSGA037614-PA"/>
    <property type="gene ID" value="BGIOSGA037614"/>
</dbReference>
<dbReference type="Gramene" id="BGIOSGA037614-TA">
    <property type="protein sequence ID" value="BGIOSGA037614-PA"/>
    <property type="gene ID" value="BGIOSGA037614"/>
</dbReference>
<dbReference type="HOGENOM" id="CLU_053306_2_1_1"/>
<dbReference type="OMA" id="GIRCFAR"/>
<dbReference type="UniPathway" id="UPA00034">
    <property type="reaction ID" value="UER00025"/>
</dbReference>
<dbReference type="Proteomes" id="UP000007015">
    <property type="component" value="Chromosome 12"/>
</dbReference>
<dbReference type="GO" id="GO:0009507">
    <property type="term" value="C:chloroplast"/>
    <property type="evidence" value="ECO:0007669"/>
    <property type="project" value="UniProtKB-SubCell"/>
</dbReference>
<dbReference type="GO" id="GO:0005829">
    <property type="term" value="C:cytosol"/>
    <property type="evidence" value="ECO:0007669"/>
    <property type="project" value="TreeGrafter"/>
</dbReference>
<dbReference type="GO" id="GO:0008837">
    <property type="term" value="F:diaminopimelate epimerase activity"/>
    <property type="evidence" value="ECO:0007669"/>
    <property type="project" value="UniProtKB-EC"/>
</dbReference>
<dbReference type="GO" id="GO:0009089">
    <property type="term" value="P:lysine biosynthetic process via diaminopimelate"/>
    <property type="evidence" value="ECO:0007669"/>
    <property type="project" value="UniProtKB-UniPathway"/>
</dbReference>
<dbReference type="FunFam" id="3.10.310.10:FF:000009">
    <property type="entry name" value="Diaminopimelate epimerase chloroplastic"/>
    <property type="match status" value="1"/>
</dbReference>
<dbReference type="FunFam" id="3.10.310.10:FF:000011">
    <property type="entry name" value="Diaminopimelate epimerase, chloroplastic"/>
    <property type="match status" value="1"/>
</dbReference>
<dbReference type="Gene3D" id="3.10.310.10">
    <property type="entry name" value="Diaminopimelate Epimerase, Chain A, domain 1"/>
    <property type="match status" value="2"/>
</dbReference>
<dbReference type="HAMAP" id="MF_00197">
    <property type="entry name" value="DAP_epimerase"/>
    <property type="match status" value="1"/>
</dbReference>
<dbReference type="InterPro" id="IPR018510">
    <property type="entry name" value="DAP_epimerase_AS"/>
</dbReference>
<dbReference type="InterPro" id="IPR001653">
    <property type="entry name" value="DAP_epimerase_DapF"/>
</dbReference>
<dbReference type="NCBIfam" id="TIGR00652">
    <property type="entry name" value="DapF"/>
    <property type="match status" value="1"/>
</dbReference>
<dbReference type="PANTHER" id="PTHR31689:SF0">
    <property type="entry name" value="DIAMINOPIMELATE EPIMERASE"/>
    <property type="match status" value="1"/>
</dbReference>
<dbReference type="PANTHER" id="PTHR31689">
    <property type="entry name" value="DIAMINOPIMELATE EPIMERASE, CHLOROPLASTIC"/>
    <property type="match status" value="1"/>
</dbReference>
<dbReference type="Pfam" id="PF01678">
    <property type="entry name" value="DAP_epimerase"/>
    <property type="match status" value="2"/>
</dbReference>
<dbReference type="SUPFAM" id="SSF54506">
    <property type="entry name" value="Diaminopimelate epimerase-like"/>
    <property type="match status" value="2"/>
</dbReference>
<dbReference type="PROSITE" id="PS01326">
    <property type="entry name" value="DAP_EPIMERASE"/>
    <property type="match status" value="1"/>
</dbReference>
<organism>
    <name type="scientific">Oryza sativa subsp. indica</name>
    <name type="common">Rice</name>
    <dbReference type="NCBI Taxonomy" id="39946"/>
    <lineage>
        <taxon>Eukaryota</taxon>
        <taxon>Viridiplantae</taxon>
        <taxon>Streptophyta</taxon>
        <taxon>Embryophyta</taxon>
        <taxon>Tracheophyta</taxon>
        <taxon>Spermatophyta</taxon>
        <taxon>Magnoliopsida</taxon>
        <taxon>Liliopsida</taxon>
        <taxon>Poales</taxon>
        <taxon>Poaceae</taxon>
        <taxon>BOP clade</taxon>
        <taxon>Oryzoideae</taxon>
        <taxon>Oryzeae</taxon>
        <taxon>Oryzinae</taxon>
        <taxon>Oryza</taxon>
        <taxon>Oryza sativa</taxon>
    </lineage>
</organism>
<comment type="catalytic activity">
    <reaction>
        <text>(2S,6S)-2,6-diaminopimelate = meso-2,6-diaminopimelate</text>
        <dbReference type="Rhea" id="RHEA:15393"/>
        <dbReference type="ChEBI" id="CHEBI:57609"/>
        <dbReference type="ChEBI" id="CHEBI:57791"/>
        <dbReference type="EC" id="5.1.1.7"/>
    </reaction>
</comment>
<comment type="pathway">
    <text>Amino-acid biosynthesis; L-lysine biosynthesis via DAP pathway; DL-2,6-diaminopimelate from LL-2,6-diaminopimelate: step 1/1.</text>
</comment>
<comment type="subcellular location">
    <subcellularLocation>
        <location evidence="3">Plastid</location>
        <location evidence="3">Chloroplast</location>
    </subcellularLocation>
</comment>
<comment type="similarity">
    <text evidence="3">Belongs to the diaminopimelate epimerase family.</text>
</comment>
<protein>
    <recommendedName>
        <fullName>Putative diaminopimelate epimerase, chloroplastic</fullName>
        <shortName>DAP epimerase</shortName>
        <ecNumber>5.1.1.7</ecNumber>
    </recommendedName>
</protein>